<accession>A8HYF4</accession>
<evidence type="ECO:0000255" key="1">
    <source>
        <dbReference type="HAMAP-Rule" id="MF_00175"/>
    </source>
</evidence>
<evidence type="ECO:0000255" key="2">
    <source>
        <dbReference type="PROSITE-ProRule" id="PRU01250"/>
    </source>
</evidence>
<keyword id="KW-0067">ATP-binding</keyword>
<keyword id="KW-0143">Chaperone</keyword>
<keyword id="KW-0479">Metal-binding</keyword>
<keyword id="KW-0547">Nucleotide-binding</keyword>
<keyword id="KW-1185">Reference proteome</keyword>
<keyword id="KW-0862">Zinc</keyword>
<feature type="chain" id="PRO_1000071621" description="ATP-dependent Clp protease ATP-binding subunit ClpX">
    <location>
        <begin position="1"/>
        <end position="422"/>
    </location>
</feature>
<feature type="domain" description="ClpX-type ZB" evidence="2">
    <location>
        <begin position="3"/>
        <end position="56"/>
    </location>
</feature>
<feature type="binding site" evidence="2">
    <location>
        <position position="15"/>
    </location>
    <ligand>
        <name>Zn(2+)</name>
        <dbReference type="ChEBI" id="CHEBI:29105"/>
    </ligand>
</feature>
<feature type="binding site" evidence="2">
    <location>
        <position position="18"/>
    </location>
    <ligand>
        <name>Zn(2+)</name>
        <dbReference type="ChEBI" id="CHEBI:29105"/>
    </ligand>
</feature>
<feature type="binding site" evidence="2">
    <location>
        <position position="37"/>
    </location>
    <ligand>
        <name>Zn(2+)</name>
        <dbReference type="ChEBI" id="CHEBI:29105"/>
    </ligand>
</feature>
<feature type="binding site" evidence="2">
    <location>
        <position position="40"/>
    </location>
    <ligand>
        <name>Zn(2+)</name>
        <dbReference type="ChEBI" id="CHEBI:29105"/>
    </ligand>
</feature>
<feature type="binding site" evidence="1">
    <location>
        <begin position="119"/>
        <end position="126"/>
    </location>
    <ligand>
        <name>ATP</name>
        <dbReference type="ChEBI" id="CHEBI:30616"/>
    </ligand>
</feature>
<proteinExistence type="inferred from homology"/>
<protein>
    <recommendedName>
        <fullName evidence="1">ATP-dependent Clp protease ATP-binding subunit ClpX</fullName>
    </recommendedName>
</protein>
<comment type="function">
    <text evidence="1">ATP-dependent specificity component of the Clp protease. It directs the protease to specific substrates. Can perform chaperone functions in the absence of ClpP.</text>
</comment>
<comment type="subunit">
    <text evidence="1">Component of the ClpX-ClpP complex. Forms a hexameric ring that, in the presence of ATP, binds to fourteen ClpP subunits assembled into a disk-like structure with a central cavity, resembling the structure of eukaryotic proteasomes.</text>
</comment>
<comment type="similarity">
    <text evidence="1">Belongs to the ClpX chaperone family.</text>
</comment>
<sequence>MSKTGGSDSKNTLYCSFCGKSQHEVRKLIAGPTVFICDECVELCMDIIREESKSSLVKSRDGIPTPKEIRKVLDDYVIGQDHAKKVLSVAVHNHYKRLNHATKHGDVELAKSNIMLIGPTGSGKTLLAQTLARILDVPFTMADATTLTEAGYVGEDVENIILKLLQAADYNVERAQRGIVYIDEIDKISRKSDNPSITRDVSGEGVQQALLKIMEGTVASVPPQGGRKHPQQEFLQVDTTNILFICGGAFAGLDKIISSRSKGGTSIGFGAKVAPVEERRPGELFREVEPEDLLKYGLIPEFIGRLPVLATLNDLDEAALKQILAEPKNALVKQYQRLFEMENVDLTIHEEALGAIARKAIERKTGARGLRSIMEGILLDTMFDLPGLEGVEEVVISKEVVEQNARPLYIYADRVGDAGASA</sequence>
<organism>
    <name type="scientific">Azorhizobium caulinodans (strain ATCC 43989 / DSM 5975 / JCM 20966 / LMG 6465 / NBRC 14845 / NCIMB 13405 / ORS 571)</name>
    <dbReference type="NCBI Taxonomy" id="438753"/>
    <lineage>
        <taxon>Bacteria</taxon>
        <taxon>Pseudomonadati</taxon>
        <taxon>Pseudomonadota</taxon>
        <taxon>Alphaproteobacteria</taxon>
        <taxon>Hyphomicrobiales</taxon>
        <taxon>Xanthobacteraceae</taxon>
        <taxon>Azorhizobium</taxon>
    </lineage>
</organism>
<name>CLPX_AZOC5</name>
<gene>
    <name evidence="1" type="primary">clpX</name>
    <name type="ordered locus">AZC_1609</name>
</gene>
<reference key="1">
    <citation type="submission" date="2007-04" db="EMBL/GenBank/DDBJ databases">
        <title>Complete genome sequence of the nitrogen-fixing bacterium Azorhizobium caulinodans ORS571.</title>
        <authorList>
            <person name="Lee K.B."/>
            <person name="Backer P.D."/>
            <person name="Aono T."/>
            <person name="Liu C.T."/>
            <person name="Suzuki S."/>
            <person name="Suzuki T."/>
            <person name="Kaneko T."/>
            <person name="Yamada M."/>
            <person name="Tabata S."/>
            <person name="Kupfer D.M."/>
            <person name="Najar F.Z."/>
            <person name="Wiley G.B."/>
            <person name="Roe B."/>
            <person name="Binnewies T."/>
            <person name="Ussery D."/>
            <person name="Vereecke D."/>
            <person name="Gevers D."/>
            <person name="Holsters M."/>
            <person name="Oyaizu H."/>
        </authorList>
    </citation>
    <scope>NUCLEOTIDE SEQUENCE [LARGE SCALE GENOMIC DNA]</scope>
    <source>
        <strain>ATCC 43989 / DSM 5975 / JCM 20966 / LMG 6465 / NBRC 14845 / NCIMB 13405 / ORS 571</strain>
    </source>
</reference>
<dbReference type="EMBL" id="AP009384">
    <property type="protein sequence ID" value="BAF87607.1"/>
    <property type="molecule type" value="Genomic_DNA"/>
</dbReference>
<dbReference type="RefSeq" id="WP_012170137.1">
    <property type="nucleotide sequence ID" value="NC_009937.1"/>
</dbReference>
<dbReference type="SMR" id="A8HYF4"/>
<dbReference type="STRING" id="438753.AZC_1609"/>
<dbReference type="KEGG" id="azc:AZC_1609"/>
<dbReference type="eggNOG" id="COG1219">
    <property type="taxonomic scope" value="Bacteria"/>
</dbReference>
<dbReference type="HOGENOM" id="CLU_014218_8_2_5"/>
<dbReference type="Proteomes" id="UP000000270">
    <property type="component" value="Chromosome"/>
</dbReference>
<dbReference type="GO" id="GO:0009376">
    <property type="term" value="C:HslUV protease complex"/>
    <property type="evidence" value="ECO:0007669"/>
    <property type="project" value="TreeGrafter"/>
</dbReference>
<dbReference type="GO" id="GO:0005524">
    <property type="term" value="F:ATP binding"/>
    <property type="evidence" value="ECO:0007669"/>
    <property type="project" value="UniProtKB-UniRule"/>
</dbReference>
<dbReference type="GO" id="GO:0016887">
    <property type="term" value="F:ATP hydrolysis activity"/>
    <property type="evidence" value="ECO:0007669"/>
    <property type="project" value="InterPro"/>
</dbReference>
<dbReference type="GO" id="GO:0140662">
    <property type="term" value="F:ATP-dependent protein folding chaperone"/>
    <property type="evidence" value="ECO:0007669"/>
    <property type="project" value="InterPro"/>
</dbReference>
<dbReference type="GO" id="GO:0046983">
    <property type="term" value="F:protein dimerization activity"/>
    <property type="evidence" value="ECO:0007669"/>
    <property type="project" value="InterPro"/>
</dbReference>
<dbReference type="GO" id="GO:0051082">
    <property type="term" value="F:unfolded protein binding"/>
    <property type="evidence" value="ECO:0007669"/>
    <property type="project" value="UniProtKB-UniRule"/>
</dbReference>
<dbReference type="GO" id="GO:0008270">
    <property type="term" value="F:zinc ion binding"/>
    <property type="evidence" value="ECO:0007669"/>
    <property type="project" value="InterPro"/>
</dbReference>
<dbReference type="GO" id="GO:0051301">
    <property type="term" value="P:cell division"/>
    <property type="evidence" value="ECO:0007669"/>
    <property type="project" value="TreeGrafter"/>
</dbReference>
<dbReference type="GO" id="GO:0051603">
    <property type="term" value="P:proteolysis involved in protein catabolic process"/>
    <property type="evidence" value="ECO:0007669"/>
    <property type="project" value="TreeGrafter"/>
</dbReference>
<dbReference type="CDD" id="cd19497">
    <property type="entry name" value="RecA-like_ClpX"/>
    <property type="match status" value="1"/>
</dbReference>
<dbReference type="FunFam" id="1.10.8.60:FF:000002">
    <property type="entry name" value="ATP-dependent Clp protease ATP-binding subunit ClpX"/>
    <property type="match status" value="1"/>
</dbReference>
<dbReference type="FunFam" id="3.40.50.300:FF:000005">
    <property type="entry name" value="ATP-dependent Clp protease ATP-binding subunit ClpX"/>
    <property type="match status" value="1"/>
</dbReference>
<dbReference type="Gene3D" id="1.10.8.60">
    <property type="match status" value="1"/>
</dbReference>
<dbReference type="Gene3D" id="6.20.220.10">
    <property type="entry name" value="ClpX chaperone, C4-type zinc finger domain"/>
    <property type="match status" value="1"/>
</dbReference>
<dbReference type="Gene3D" id="3.40.50.300">
    <property type="entry name" value="P-loop containing nucleotide triphosphate hydrolases"/>
    <property type="match status" value="1"/>
</dbReference>
<dbReference type="HAMAP" id="MF_00175">
    <property type="entry name" value="ClpX"/>
    <property type="match status" value="1"/>
</dbReference>
<dbReference type="InterPro" id="IPR003593">
    <property type="entry name" value="AAA+_ATPase"/>
</dbReference>
<dbReference type="InterPro" id="IPR050052">
    <property type="entry name" value="ATP-dep_Clp_protease_ClpX"/>
</dbReference>
<dbReference type="InterPro" id="IPR003959">
    <property type="entry name" value="ATPase_AAA_core"/>
</dbReference>
<dbReference type="InterPro" id="IPR019489">
    <property type="entry name" value="Clp_ATPase_C"/>
</dbReference>
<dbReference type="InterPro" id="IPR004487">
    <property type="entry name" value="Clp_protease_ATP-bd_su_ClpX"/>
</dbReference>
<dbReference type="InterPro" id="IPR046425">
    <property type="entry name" value="ClpX_bact"/>
</dbReference>
<dbReference type="InterPro" id="IPR027417">
    <property type="entry name" value="P-loop_NTPase"/>
</dbReference>
<dbReference type="InterPro" id="IPR010603">
    <property type="entry name" value="Znf_CppX_C4"/>
</dbReference>
<dbReference type="InterPro" id="IPR038366">
    <property type="entry name" value="Znf_CppX_C4_sf"/>
</dbReference>
<dbReference type="NCBIfam" id="TIGR00382">
    <property type="entry name" value="clpX"/>
    <property type="match status" value="1"/>
</dbReference>
<dbReference type="NCBIfam" id="NF003745">
    <property type="entry name" value="PRK05342.1"/>
    <property type="match status" value="1"/>
</dbReference>
<dbReference type="PANTHER" id="PTHR48102:SF7">
    <property type="entry name" value="ATP-DEPENDENT CLP PROTEASE ATP-BINDING SUBUNIT CLPX-LIKE, MITOCHONDRIAL"/>
    <property type="match status" value="1"/>
</dbReference>
<dbReference type="PANTHER" id="PTHR48102">
    <property type="entry name" value="ATP-DEPENDENT CLP PROTEASE ATP-BINDING SUBUNIT CLPX-LIKE, MITOCHONDRIAL-RELATED"/>
    <property type="match status" value="1"/>
</dbReference>
<dbReference type="Pfam" id="PF07724">
    <property type="entry name" value="AAA_2"/>
    <property type="match status" value="1"/>
</dbReference>
<dbReference type="Pfam" id="PF10431">
    <property type="entry name" value="ClpB_D2-small"/>
    <property type="match status" value="1"/>
</dbReference>
<dbReference type="Pfam" id="PF06689">
    <property type="entry name" value="zf-C4_ClpX"/>
    <property type="match status" value="1"/>
</dbReference>
<dbReference type="SMART" id="SM00382">
    <property type="entry name" value="AAA"/>
    <property type="match status" value="1"/>
</dbReference>
<dbReference type="SMART" id="SM01086">
    <property type="entry name" value="ClpB_D2-small"/>
    <property type="match status" value="1"/>
</dbReference>
<dbReference type="SMART" id="SM00994">
    <property type="entry name" value="zf-C4_ClpX"/>
    <property type="match status" value="1"/>
</dbReference>
<dbReference type="SUPFAM" id="SSF57716">
    <property type="entry name" value="Glucocorticoid receptor-like (DNA-binding domain)"/>
    <property type="match status" value="1"/>
</dbReference>
<dbReference type="SUPFAM" id="SSF52540">
    <property type="entry name" value="P-loop containing nucleoside triphosphate hydrolases"/>
    <property type="match status" value="1"/>
</dbReference>
<dbReference type="PROSITE" id="PS51902">
    <property type="entry name" value="CLPX_ZB"/>
    <property type="match status" value="1"/>
</dbReference>